<organism>
    <name type="scientific">Paracoccus denitrificans</name>
    <dbReference type="NCBI Taxonomy" id="266"/>
    <lineage>
        <taxon>Bacteria</taxon>
        <taxon>Pseudomonadati</taxon>
        <taxon>Pseudomonadota</taxon>
        <taxon>Alphaproteobacteria</taxon>
        <taxon>Rhodobacterales</taxon>
        <taxon>Paracoccaceae</taxon>
        <taxon>Paracoccus</taxon>
    </lineage>
</organism>
<dbReference type="EMBL" id="X05829">
    <property type="protein sequence ID" value="CAA29273.1"/>
    <property type="molecule type" value="Genomic_DNA"/>
</dbReference>
<dbReference type="PIR" id="S03808">
    <property type="entry name" value="S03808"/>
</dbReference>
<dbReference type="SMR" id="P08304"/>
<dbReference type="GO" id="GO:0051920">
    <property type="term" value="F:peroxiredoxin activity"/>
    <property type="evidence" value="ECO:0007669"/>
    <property type="project" value="InterPro"/>
</dbReference>
<dbReference type="Gene3D" id="1.20.1290.10">
    <property type="entry name" value="AhpD-like"/>
    <property type="match status" value="1"/>
</dbReference>
<dbReference type="InterPro" id="IPR029032">
    <property type="entry name" value="AhpD-like"/>
</dbReference>
<dbReference type="InterPro" id="IPR004675">
    <property type="entry name" value="AhpD_core"/>
</dbReference>
<dbReference type="InterPro" id="IPR003779">
    <property type="entry name" value="CMD-like"/>
</dbReference>
<dbReference type="NCBIfam" id="TIGR00778">
    <property type="entry name" value="ahpD_dom"/>
    <property type="match status" value="1"/>
</dbReference>
<dbReference type="PANTHER" id="PTHR33930">
    <property type="entry name" value="ALKYL HYDROPEROXIDE REDUCTASE AHPD"/>
    <property type="match status" value="1"/>
</dbReference>
<dbReference type="PANTHER" id="PTHR33930:SF2">
    <property type="entry name" value="BLR3452 PROTEIN"/>
    <property type="match status" value="1"/>
</dbReference>
<dbReference type="Pfam" id="PF02627">
    <property type="entry name" value="CMD"/>
    <property type="match status" value="1"/>
</dbReference>
<dbReference type="SUPFAM" id="SSF69118">
    <property type="entry name" value="AhpD-like"/>
    <property type="match status" value="1"/>
</dbReference>
<feature type="chain" id="PRO_0000066176" description="Uncharacterized protein 4 in cox locus">
    <location>
        <begin position="1"/>
        <end position="111"/>
    </location>
</feature>
<name>YCO4_PARDE</name>
<sequence>MADISMPKASAALGETSRAGASIDDAFLALSKVVFADGALDKRTKQLIAVAVAHVTQCPWCIEGHVKGARREGATNEQIMEAIWVAAEMRAGAAYAHANKALAVLDEIDGA</sequence>
<reference key="1">
    <citation type="journal article" date="1987" name="EMBO J.">
        <title>Isolation and analysis of the genes for cytochrome c oxidase in Paracoccus denitrificans.</title>
        <authorList>
            <person name="Raitio M."/>
            <person name="Jalli T."/>
            <person name="Saraste M."/>
        </authorList>
    </citation>
    <scope>NUCLEOTIDE SEQUENCE [GENOMIC DNA]</scope>
</reference>
<protein>
    <recommendedName>
        <fullName>Uncharacterized protein 4 in cox locus</fullName>
    </recommendedName>
</protein>
<accession>P08304</accession>
<proteinExistence type="predicted"/>